<gene>
    <name evidence="1" type="primary">rplL</name>
    <name type="ordered locus">Lxx03160</name>
</gene>
<evidence type="ECO:0000255" key="1">
    <source>
        <dbReference type="HAMAP-Rule" id="MF_00368"/>
    </source>
</evidence>
<evidence type="ECO:0000256" key="2">
    <source>
        <dbReference type="SAM" id="MobiDB-lite"/>
    </source>
</evidence>
<evidence type="ECO:0000305" key="3"/>
<proteinExistence type="inferred from homology"/>
<sequence length="132" mass="13544">MAKLSTDELLEAFKDLTLIELSEFVKKFEETFEVTAAAPPVAVAAAPAAGGAGAAAEDAEQKDSFDIVLESVDASKKIQVIKEVRALTSLGLGEAKALVDGAPSTVLEGANKEAADKAKTQLEGAGGTINLK</sequence>
<name>RL7_LEIXX</name>
<comment type="function">
    <text evidence="1">Forms part of the ribosomal stalk which helps the ribosome interact with GTP-bound translation factors. Is thus essential for accurate translation.</text>
</comment>
<comment type="subunit">
    <text evidence="1">Homodimer. Part of the ribosomal stalk of the 50S ribosomal subunit. Forms a multimeric L10(L12)X complex, where L10 forms an elongated spine to which 2 to 4 L12 dimers bind in a sequential fashion. Binds GTP-bound translation factors.</text>
</comment>
<comment type="similarity">
    <text evidence="1">Belongs to the bacterial ribosomal protein bL12 family.</text>
</comment>
<reference key="1">
    <citation type="journal article" date="2004" name="Mol. Plant Microbe Interact.">
        <title>The genome sequence of the Gram-positive sugarcane pathogen Leifsonia xyli subsp. xyli.</title>
        <authorList>
            <person name="Monteiro-Vitorello C.B."/>
            <person name="Camargo L.E.A."/>
            <person name="Van Sluys M.A."/>
            <person name="Kitajima J.P."/>
            <person name="Truffi D."/>
            <person name="do Amaral A.M."/>
            <person name="Harakava R."/>
            <person name="de Oliveira J.C.F."/>
            <person name="Wood D."/>
            <person name="de Oliveira M.C."/>
            <person name="Miyaki C.Y."/>
            <person name="Takita M.A."/>
            <person name="da Silva A.C.R."/>
            <person name="Furlan L.R."/>
            <person name="Carraro D.M."/>
            <person name="Camarotte G."/>
            <person name="Almeida N.F. Jr."/>
            <person name="Carrer H."/>
            <person name="Coutinho L.L."/>
            <person name="El-Dorry H.A."/>
            <person name="Ferro M.I.T."/>
            <person name="Gagliardi P.R."/>
            <person name="Giglioti E."/>
            <person name="Goldman M.H.S."/>
            <person name="Goldman G.H."/>
            <person name="Kimura E.T."/>
            <person name="Ferro E.S."/>
            <person name="Kuramae E.E."/>
            <person name="Lemos E.G.M."/>
            <person name="Lemos M.V.F."/>
            <person name="Mauro S.M.Z."/>
            <person name="Machado M.A."/>
            <person name="Marino C.L."/>
            <person name="Menck C.F."/>
            <person name="Nunes L.R."/>
            <person name="Oliveira R.C."/>
            <person name="Pereira G.G."/>
            <person name="Siqueira W."/>
            <person name="de Souza A.A."/>
            <person name="Tsai S.M."/>
            <person name="Zanca A.S."/>
            <person name="Simpson A.J.G."/>
            <person name="Brumbley S.M."/>
            <person name="Setubal J.C."/>
        </authorList>
    </citation>
    <scope>NUCLEOTIDE SEQUENCE [LARGE SCALE GENOMIC DNA]</scope>
    <source>
        <strain>CTCB07</strain>
    </source>
</reference>
<organism>
    <name type="scientific">Leifsonia xyli subsp. xyli (strain CTCB07)</name>
    <dbReference type="NCBI Taxonomy" id="281090"/>
    <lineage>
        <taxon>Bacteria</taxon>
        <taxon>Bacillati</taxon>
        <taxon>Actinomycetota</taxon>
        <taxon>Actinomycetes</taxon>
        <taxon>Micrococcales</taxon>
        <taxon>Microbacteriaceae</taxon>
        <taxon>Leifsonia</taxon>
    </lineage>
</organism>
<protein>
    <recommendedName>
        <fullName evidence="1">Large ribosomal subunit protein bL12</fullName>
    </recommendedName>
    <alternativeName>
        <fullName evidence="3">50S ribosomal protein L7/L12</fullName>
    </alternativeName>
</protein>
<keyword id="KW-1185">Reference proteome</keyword>
<keyword id="KW-0687">Ribonucleoprotein</keyword>
<keyword id="KW-0689">Ribosomal protein</keyword>
<dbReference type="EMBL" id="AE016822">
    <property type="protein sequence ID" value="AAT88335.1"/>
    <property type="molecule type" value="Genomic_DNA"/>
</dbReference>
<dbReference type="RefSeq" id="WP_011185338.1">
    <property type="nucleotide sequence ID" value="NC_006087.1"/>
</dbReference>
<dbReference type="SMR" id="Q6AH10"/>
<dbReference type="STRING" id="281090.Lxx03160"/>
<dbReference type="KEGG" id="lxx:Lxx03160"/>
<dbReference type="eggNOG" id="COG0222">
    <property type="taxonomic scope" value="Bacteria"/>
</dbReference>
<dbReference type="HOGENOM" id="CLU_086499_3_0_11"/>
<dbReference type="Proteomes" id="UP000001306">
    <property type="component" value="Chromosome"/>
</dbReference>
<dbReference type="GO" id="GO:0022625">
    <property type="term" value="C:cytosolic large ribosomal subunit"/>
    <property type="evidence" value="ECO:0007669"/>
    <property type="project" value="TreeGrafter"/>
</dbReference>
<dbReference type="GO" id="GO:0003729">
    <property type="term" value="F:mRNA binding"/>
    <property type="evidence" value="ECO:0007669"/>
    <property type="project" value="TreeGrafter"/>
</dbReference>
<dbReference type="GO" id="GO:0003735">
    <property type="term" value="F:structural constituent of ribosome"/>
    <property type="evidence" value="ECO:0007669"/>
    <property type="project" value="InterPro"/>
</dbReference>
<dbReference type="GO" id="GO:0006412">
    <property type="term" value="P:translation"/>
    <property type="evidence" value="ECO:0007669"/>
    <property type="project" value="UniProtKB-UniRule"/>
</dbReference>
<dbReference type="CDD" id="cd00387">
    <property type="entry name" value="Ribosomal_L7_L12"/>
    <property type="match status" value="1"/>
</dbReference>
<dbReference type="FunFam" id="3.30.1390.10:FF:000001">
    <property type="entry name" value="50S ribosomal protein L7/L12"/>
    <property type="match status" value="1"/>
</dbReference>
<dbReference type="Gene3D" id="3.30.1390.10">
    <property type="match status" value="1"/>
</dbReference>
<dbReference type="Gene3D" id="1.20.5.710">
    <property type="entry name" value="Single helix bin"/>
    <property type="match status" value="1"/>
</dbReference>
<dbReference type="HAMAP" id="MF_00368">
    <property type="entry name" value="Ribosomal_bL12"/>
    <property type="match status" value="1"/>
</dbReference>
<dbReference type="InterPro" id="IPR000206">
    <property type="entry name" value="Ribosomal_bL12"/>
</dbReference>
<dbReference type="InterPro" id="IPR013823">
    <property type="entry name" value="Ribosomal_bL12_C"/>
</dbReference>
<dbReference type="InterPro" id="IPR014719">
    <property type="entry name" value="Ribosomal_bL12_C/ClpS-like"/>
</dbReference>
<dbReference type="InterPro" id="IPR008932">
    <property type="entry name" value="Ribosomal_bL12_oligo"/>
</dbReference>
<dbReference type="InterPro" id="IPR036235">
    <property type="entry name" value="Ribosomal_bL12_oligo_N_sf"/>
</dbReference>
<dbReference type="NCBIfam" id="TIGR00855">
    <property type="entry name" value="L12"/>
    <property type="match status" value="1"/>
</dbReference>
<dbReference type="PANTHER" id="PTHR45987">
    <property type="entry name" value="39S RIBOSOMAL PROTEIN L12"/>
    <property type="match status" value="1"/>
</dbReference>
<dbReference type="PANTHER" id="PTHR45987:SF4">
    <property type="entry name" value="LARGE RIBOSOMAL SUBUNIT PROTEIN BL12M"/>
    <property type="match status" value="1"/>
</dbReference>
<dbReference type="Pfam" id="PF00542">
    <property type="entry name" value="Ribosomal_L12"/>
    <property type="match status" value="1"/>
</dbReference>
<dbReference type="Pfam" id="PF16320">
    <property type="entry name" value="Ribosomal_L12_N"/>
    <property type="match status" value="1"/>
</dbReference>
<dbReference type="SUPFAM" id="SSF54736">
    <property type="entry name" value="ClpS-like"/>
    <property type="match status" value="1"/>
</dbReference>
<dbReference type="SUPFAM" id="SSF48300">
    <property type="entry name" value="Ribosomal protein L7/12, oligomerisation (N-terminal) domain"/>
    <property type="match status" value="1"/>
</dbReference>
<feature type="chain" id="PRO_0000157539" description="Large ribosomal subunit protein bL12">
    <location>
        <begin position="1"/>
        <end position="132"/>
    </location>
</feature>
<feature type="region of interest" description="Disordered" evidence="2">
    <location>
        <begin position="112"/>
        <end position="132"/>
    </location>
</feature>
<accession>Q6AH10</accession>